<keyword id="KW-0489">Methyltransferase</keyword>
<keyword id="KW-0511">Multifunctional enzyme</keyword>
<keyword id="KW-0521">NADP</keyword>
<keyword id="KW-0545">Nucleotide biosynthesis</keyword>
<keyword id="KW-0554">One-carbon metabolism</keyword>
<keyword id="KW-0560">Oxidoreductase</keyword>
<keyword id="KW-1185">Reference proteome</keyword>
<keyword id="KW-0808">Transferase</keyword>
<evidence type="ECO:0000250" key="1"/>
<evidence type="ECO:0000305" key="2"/>
<dbReference type="EC" id="1.5.1.3"/>
<dbReference type="EC" id="2.1.1.45"/>
<dbReference type="EMBL" id="L08594">
    <property type="protein sequence ID" value="AAA32789.1"/>
    <property type="status" value="ALT_SEQ"/>
    <property type="molecule type" value="Genomic_DNA"/>
</dbReference>
<dbReference type="EMBL" id="AL023094">
    <property type="protein sequence ID" value="CAA18836.1"/>
    <property type="status" value="ALT_SEQ"/>
    <property type="molecule type" value="Genomic_DNA"/>
</dbReference>
<dbReference type="EMBL" id="AL161585">
    <property type="protein sequence ID" value="CAB80174.1"/>
    <property type="status" value="ALT_SEQ"/>
    <property type="molecule type" value="Genomic_DNA"/>
</dbReference>
<dbReference type="EMBL" id="CP002687">
    <property type="protein sequence ID" value="AEE86394.1"/>
    <property type="molecule type" value="Genomic_DNA"/>
</dbReference>
<dbReference type="EMBL" id="AK227728">
    <property type="protein sequence ID" value="BAE99713.1"/>
    <property type="molecule type" value="mRNA"/>
</dbReference>
<dbReference type="EMBL" id="BT003159">
    <property type="protein sequence ID" value="AAO24591.1"/>
    <property type="molecule type" value="mRNA"/>
</dbReference>
<dbReference type="PIR" id="T05277">
    <property type="entry name" value="T05277"/>
</dbReference>
<dbReference type="RefSeq" id="NP_001328948.1">
    <property type="nucleotide sequence ID" value="NM_001342290.1"/>
</dbReference>
<dbReference type="RefSeq" id="NP_001328950.1">
    <property type="nucleotide sequence ID" value="NM_001342292.1"/>
</dbReference>
<dbReference type="RefSeq" id="NP_195183.2">
    <property type="nucleotide sequence ID" value="NM_119623.5"/>
</dbReference>
<dbReference type="SMR" id="Q05763"/>
<dbReference type="BioGRID" id="14891">
    <property type="interactions" value="1"/>
</dbReference>
<dbReference type="FunCoup" id="Q05763">
    <property type="interactions" value="3391"/>
</dbReference>
<dbReference type="IntAct" id="Q05763">
    <property type="interactions" value="1"/>
</dbReference>
<dbReference type="STRING" id="3702.Q05763"/>
<dbReference type="PaxDb" id="3702-AT4G34570.1"/>
<dbReference type="ProteomicsDB" id="224372"/>
<dbReference type="EnsemblPlants" id="AT4G34570.1">
    <property type="protein sequence ID" value="AT4G34570.1"/>
    <property type="gene ID" value="AT4G34570"/>
</dbReference>
<dbReference type="GeneID" id="829609"/>
<dbReference type="Gramene" id="AT4G34570.1">
    <property type="protein sequence ID" value="AT4G34570.1"/>
    <property type="gene ID" value="AT4G34570"/>
</dbReference>
<dbReference type="KEGG" id="ath:AT4G34570"/>
<dbReference type="Araport" id="AT4G34570"/>
<dbReference type="TAIR" id="AT4G34570">
    <property type="gene designation" value="DHFR-TS2"/>
</dbReference>
<dbReference type="eggNOG" id="KOG0673">
    <property type="taxonomic scope" value="Eukaryota"/>
</dbReference>
<dbReference type="eggNOG" id="KOG1324">
    <property type="taxonomic scope" value="Eukaryota"/>
</dbReference>
<dbReference type="HOGENOM" id="CLU_021669_2_2_1"/>
<dbReference type="InParanoid" id="Q05763"/>
<dbReference type="OrthoDB" id="766at2759"/>
<dbReference type="PhylomeDB" id="Q05763"/>
<dbReference type="BioCyc" id="ARA:AT4G34570-MONOMER"/>
<dbReference type="UniPathway" id="UPA00077">
    <property type="reaction ID" value="UER00158"/>
</dbReference>
<dbReference type="PRO" id="PR:Q05763"/>
<dbReference type="Proteomes" id="UP000006548">
    <property type="component" value="Chromosome 4"/>
</dbReference>
<dbReference type="ExpressionAtlas" id="Q05763">
    <property type="expression patterns" value="baseline and differential"/>
</dbReference>
<dbReference type="GO" id="GO:0005739">
    <property type="term" value="C:mitochondrion"/>
    <property type="evidence" value="ECO:0000314"/>
    <property type="project" value="TAIR"/>
</dbReference>
<dbReference type="GO" id="GO:0004146">
    <property type="term" value="F:dihydrofolate reductase activity"/>
    <property type="evidence" value="ECO:0000314"/>
    <property type="project" value="TAIR"/>
</dbReference>
<dbReference type="GO" id="GO:0004799">
    <property type="term" value="F:thymidylate synthase activity"/>
    <property type="evidence" value="ECO:0000250"/>
    <property type="project" value="TAIR"/>
</dbReference>
<dbReference type="GO" id="GO:0009257">
    <property type="term" value="P:10-formyltetrahydrofolate biosynthetic process"/>
    <property type="evidence" value="ECO:0000250"/>
    <property type="project" value="TAIR"/>
</dbReference>
<dbReference type="GO" id="GO:0006231">
    <property type="term" value="P:dTMP biosynthetic process"/>
    <property type="evidence" value="ECO:0007669"/>
    <property type="project" value="InterPro"/>
</dbReference>
<dbReference type="GO" id="GO:0032259">
    <property type="term" value="P:methylation"/>
    <property type="evidence" value="ECO:0007669"/>
    <property type="project" value="UniProtKB-KW"/>
</dbReference>
<dbReference type="GO" id="GO:0006730">
    <property type="term" value="P:one-carbon metabolic process"/>
    <property type="evidence" value="ECO:0007669"/>
    <property type="project" value="UniProtKB-KW"/>
</dbReference>
<dbReference type="CDD" id="cd00209">
    <property type="entry name" value="DHFR"/>
    <property type="match status" value="1"/>
</dbReference>
<dbReference type="CDD" id="cd00351">
    <property type="entry name" value="TS_Pyrimidine_HMase"/>
    <property type="match status" value="1"/>
</dbReference>
<dbReference type="FunFam" id="3.40.430.10:FF:000003">
    <property type="entry name" value="Bifunctional dihydrofolate reductase-thymidylate synthase"/>
    <property type="match status" value="1"/>
</dbReference>
<dbReference type="FunFam" id="3.30.572.10:FF:000002">
    <property type="entry name" value="Possible thymidylate synthase"/>
    <property type="match status" value="1"/>
</dbReference>
<dbReference type="Gene3D" id="3.40.430.10">
    <property type="entry name" value="Dihydrofolate Reductase, subunit A"/>
    <property type="match status" value="1"/>
</dbReference>
<dbReference type="Gene3D" id="3.30.572.10">
    <property type="entry name" value="Thymidylate synthase/dCMP hydroxymethylase domain"/>
    <property type="match status" value="1"/>
</dbReference>
<dbReference type="HAMAP" id="MF_00008">
    <property type="entry name" value="Thymidy_synth_bact"/>
    <property type="match status" value="1"/>
</dbReference>
<dbReference type="InterPro" id="IPR024072">
    <property type="entry name" value="DHFR-like_dom_sf"/>
</dbReference>
<dbReference type="InterPro" id="IPR012262">
    <property type="entry name" value="DHFR-TS"/>
</dbReference>
<dbReference type="InterPro" id="IPR017925">
    <property type="entry name" value="DHFR_CS"/>
</dbReference>
<dbReference type="InterPro" id="IPR001796">
    <property type="entry name" value="DHFR_dom"/>
</dbReference>
<dbReference type="InterPro" id="IPR045097">
    <property type="entry name" value="Thymidate_synth/dCMP_Mease"/>
</dbReference>
<dbReference type="InterPro" id="IPR023451">
    <property type="entry name" value="Thymidate_synth/dCMP_Mease_dom"/>
</dbReference>
<dbReference type="InterPro" id="IPR036926">
    <property type="entry name" value="Thymidate_synth/dCMP_Mease_sf"/>
</dbReference>
<dbReference type="InterPro" id="IPR000398">
    <property type="entry name" value="Thymidylate_synthase"/>
</dbReference>
<dbReference type="InterPro" id="IPR020940">
    <property type="entry name" value="Thymidylate_synthase_AS"/>
</dbReference>
<dbReference type="NCBIfam" id="NF002497">
    <property type="entry name" value="PRK01827.1-3"/>
    <property type="match status" value="1"/>
</dbReference>
<dbReference type="NCBIfam" id="TIGR03284">
    <property type="entry name" value="thym_sym"/>
    <property type="match status" value="1"/>
</dbReference>
<dbReference type="PANTHER" id="PTHR11548:SF11">
    <property type="entry name" value="BIFUNCTIONAL DIHYDROFOLATE REDUCTASE-THYMIDYLATE SYNTHASE 2"/>
    <property type="match status" value="1"/>
</dbReference>
<dbReference type="PANTHER" id="PTHR11548">
    <property type="entry name" value="THYMIDYLATE SYNTHASE 1"/>
    <property type="match status" value="1"/>
</dbReference>
<dbReference type="Pfam" id="PF00186">
    <property type="entry name" value="DHFR_1"/>
    <property type="match status" value="1"/>
</dbReference>
<dbReference type="Pfam" id="PF00303">
    <property type="entry name" value="Thymidylat_synt"/>
    <property type="match status" value="1"/>
</dbReference>
<dbReference type="PIRSF" id="PIRSF000389">
    <property type="entry name" value="DHFR-TS"/>
    <property type="match status" value="1"/>
</dbReference>
<dbReference type="PRINTS" id="PR00108">
    <property type="entry name" value="THYMDSNTHASE"/>
</dbReference>
<dbReference type="SUPFAM" id="SSF53597">
    <property type="entry name" value="Dihydrofolate reductase-like"/>
    <property type="match status" value="1"/>
</dbReference>
<dbReference type="SUPFAM" id="SSF55831">
    <property type="entry name" value="Thymidylate synthase/dCMP hydroxymethylase"/>
    <property type="match status" value="1"/>
</dbReference>
<dbReference type="PROSITE" id="PS00075">
    <property type="entry name" value="DHFR_1"/>
    <property type="match status" value="1"/>
</dbReference>
<dbReference type="PROSITE" id="PS51330">
    <property type="entry name" value="DHFR_2"/>
    <property type="match status" value="1"/>
</dbReference>
<dbReference type="PROSITE" id="PS00091">
    <property type="entry name" value="THYMIDYLATE_SYNTHASE"/>
    <property type="match status" value="1"/>
</dbReference>
<protein>
    <recommendedName>
        <fullName>Bifunctional dihydrofolate reductase-thymidylate synthase 2</fullName>
        <shortName>DHFR-TS 2</shortName>
    </recommendedName>
    <domain>
        <recommendedName>
            <fullName>Dihydrofolate reductase</fullName>
            <ecNumber>1.5.1.3</ecNumber>
        </recommendedName>
    </domain>
    <domain>
        <recommendedName>
            <fullName>Thymidylate synthase</fullName>
            <ecNumber>2.1.1.45</ecNumber>
        </recommendedName>
    </domain>
</protein>
<proteinExistence type="evidence at transcript level"/>
<gene>
    <name type="primary">THY-2</name>
    <name type="ordered locus">At4g34570</name>
    <name type="ORF">T4L20.150</name>
</gene>
<feature type="chain" id="PRO_0000186356" description="Bifunctional dihydrofolate reductase-thymidylate synthase 2">
    <location>
        <begin position="1"/>
        <end position="565"/>
    </location>
</feature>
<feature type="domain" description="DHFR">
    <location>
        <begin position="65"/>
        <end position="242"/>
    </location>
</feature>
<feature type="region of interest" description="Hinge">
    <location>
        <begin position="245"/>
        <end position="280"/>
    </location>
</feature>
<feature type="region of interest" description="Thymidylate synthase">
    <location>
        <begin position="281"/>
        <end position="565"/>
    </location>
</feature>
<feature type="active site" evidence="1">
    <location>
        <position position="447"/>
    </location>
</feature>
<feature type="binding site" evidence="1">
    <location>
        <position position="69"/>
    </location>
    <ligand>
        <name>substrate</name>
    </ligand>
</feature>
<feature type="binding site" evidence="1">
    <location>
        <position position="71"/>
    </location>
    <ligand>
        <name>NADP(+)</name>
        <dbReference type="ChEBI" id="CHEBI:58349"/>
    </ligand>
</feature>
<feature type="binding site" evidence="1">
    <location>
        <begin position="77"/>
        <end position="83"/>
    </location>
    <ligand>
        <name>NADP(+)</name>
        <dbReference type="ChEBI" id="CHEBI:58349"/>
    </ligand>
</feature>
<feature type="binding site" evidence="1">
    <location>
        <position position="91"/>
    </location>
    <ligand>
        <name>substrate</name>
    </ligand>
</feature>
<feature type="binding site" evidence="1">
    <location>
        <begin position="115"/>
        <end position="117"/>
    </location>
    <ligand>
        <name>NADP(+)</name>
        <dbReference type="ChEBI" id="CHEBI:58349"/>
    </ligand>
</feature>
<feature type="binding site" evidence="1">
    <location>
        <begin position="136"/>
        <end position="139"/>
    </location>
    <ligand>
        <name>NADP(+)</name>
        <dbReference type="ChEBI" id="CHEBI:58349"/>
    </ligand>
</feature>
<feature type="binding site" evidence="1">
    <location>
        <position position="178"/>
    </location>
    <ligand>
        <name>substrate</name>
    </ligand>
</feature>
<feature type="binding site" evidence="1">
    <location>
        <begin position="179"/>
        <end position="186"/>
    </location>
    <ligand>
        <name>NADP(+)</name>
        <dbReference type="ChEBI" id="CHEBI:58349"/>
    </ligand>
</feature>
<feature type="binding site" evidence="1">
    <location>
        <position position="199"/>
    </location>
    <ligand>
        <name>substrate</name>
    </ligand>
</feature>
<feature type="binding site" evidence="1">
    <location>
        <position position="302"/>
    </location>
    <ligand>
        <name>dUMP</name>
        <dbReference type="ChEBI" id="CHEBI:246422"/>
    </ligand>
</feature>
<feature type="binding site" evidence="1">
    <location>
        <position position="448"/>
    </location>
    <ligand>
        <name>dUMP</name>
        <dbReference type="ChEBI" id="CHEBI:246422"/>
    </ligand>
</feature>
<feature type="binding site" evidence="1">
    <location>
        <begin position="466"/>
        <end position="470"/>
    </location>
    <ligand>
        <name>dUMP</name>
        <dbReference type="ChEBI" id="CHEBI:246422"/>
    </ligand>
</feature>
<feature type="binding site" evidence="1">
    <location>
        <position position="478"/>
    </location>
    <ligand>
        <name>dUMP</name>
        <dbReference type="ChEBI" id="CHEBI:246422"/>
    </ligand>
</feature>
<feature type="binding site" evidence="1">
    <location>
        <begin position="508"/>
        <end position="510"/>
    </location>
    <ligand>
        <name>dUMP</name>
        <dbReference type="ChEBI" id="CHEBI:246422"/>
    </ligand>
</feature>
<accession>Q05763</accession>
<accession>Q0WT35</accession>
<reference key="1">
    <citation type="journal article" date="1993" name="Plant J.">
        <title>The origin of the bifunctional dihydrofolate reductase-thymidylate synthase isogenes of Arabidopsis thaliana.</title>
        <authorList>
            <person name="Lazar G."/>
            <person name="Zhang H."/>
            <person name="Goodman H.M."/>
        </authorList>
    </citation>
    <scope>NUCLEOTIDE SEQUENCE [MRNA]</scope>
    <source>
        <strain>cv. Landsberg erecta</strain>
    </source>
</reference>
<reference key="2">
    <citation type="journal article" date="1999" name="Nature">
        <title>Sequence and analysis of chromosome 4 of the plant Arabidopsis thaliana.</title>
        <authorList>
            <person name="Mayer K.F.X."/>
            <person name="Schueller C."/>
            <person name="Wambutt R."/>
            <person name="Murphy G."/>
            <person name="Volckaert G."/>
            <person name="Pohl T."/>
            <person name="Duesterhoeft A."/>
            <person name="Stiekema W."/>
            <person name="Entian K.-D."/>
            <person name="Terryn N."/>
            <person name="Harris B."/>
            <person name="Ansorge W."/>
            <person name="Brandt P."/>
            <person name="Grivell L.A."/>
            <person name="Rieger M."/>
            <person name="Weichselgartner M."/>
            <person name="de Simone V."/>
            <person name="Obermaier B."/>
            <person name="Mache R."/>
            <person name="Mueller M."/>
            <person name="Kreis M."/>
            <person name="Delseny M."/>
            <person name="Puigdomenech P."/>
            <person name="Watson M."/>
            <person name="Schmidtheini T."/>
            <person name="Reichert B."/>
            <person name="Portetelle D."/>
            <person name="Perez-Alonso M."/>
            <person name="Boutry M."/>
            <person name="Bancroft I."/>
            <person name="Vos P."/>
            <person name="Hoheisel J."/>
            <person name="Zimmermann W."/>
            <person name="Wedler H."/>
            <person name="Ridley P."/>
            <person name="Langham S.-A."/>
            <person name="McCullagh B."/>
            <person name="Bilham L."/>
            <person name="Robben J."/>
            <person name="van der Schueren J."/>
            <person name="Grymonprez B."/>
            <person name="Chuang Y.-J."/>
            <person name="Vandenbussche F."/>
            <person name="Braeken M."/>
            <person name="Weltjens I."/>
            <person name="Voet M."/>
            <person name="Bastiaens I."/>
            <person name="Aert R."/>
            <person name="Defoor E."/>
            <person name="Weitzenegger T."/>
            <person name="Bothe G."/>
            <person name="Ramsperger U."/>
            <person name="Hilbert H."/>
            <person name="Braun M."/>
            <person name="Holzer E."/>
            <person name="Brandt A."/>
            <person name="Peters S."/>
            <person name="van Staveren M."/>
            <person name="Dirkse W."/>
            <person name="Mooijman P."/>
            <person name="Klein Lankhorst R."/>
            <person name="Rose M."/>
            <person name="Hauf J."/>
            <person name="Koetter P."/>
            <person name="Berneiser S."/>
            <person name="Hempel S."/>
            <person name="Feldpausch M."/>
            <person name="Lamberth S."/>
            <person name="Van den Daele H."/>
            <person name="De Keyser A."/>
            <person name="Buysshaert C."/>
            <person name="Gielen J."/>
            <person name="Villarroel R."/>
            <person name="De Clercq R."/>
            <person name="van Montagu M."/>
            <person name="Rogers J."/>
            <person name="Cronin A."/>
            <person name="Quail M.A."/>
            <person name="Bray-Allen S."/>
            <person name="Clark L."/>
            <person name="Doggett J."/>
            <person name="Hall S."/>
            <person name="Kay M."/>
            <person name="Lennard N."/>
            <person name="McLay K."/>
            <person name="Mayes R."/>
            <person name="Pettett A."/>
            <person name="Rajandream M.A."/>
            <person name="Lyne M."/>
            <person name="Benes V."/>
            <person name="Rechmann S."/>
            <person name="Borkova D."/>
            <person name="Bloecker H."/>
            <person name="Scharfe M."/>
            <person name="Grimm M."/>
            <person name="Loehnert T.-H."/>
            <person name="Dose S."/>
            <person name="de Haan M."/>
            <person name="Maarse A.C."/>
            <person name="Schaefer M."/>
            <person name="Mueller-Auer S."/>
            <person name="Gabel C."/>
            <person name="Fuchs M."/>
            <person name="Fartmann B."/>
            <person name="Granderath K."/>
            <person name="Dauner D."/>
            <person name="Herzl A."/>
            <person name="Neumann S."/>
            <person name="Argiriou A."/>
            <person name="Vitale D."/>
            <person name="Liguori R."/>
            <person name="Piravandi E."/>
            <person name="Massenet O."/>
            <person name="Quigley F."/>
            <person name="Clabauld G."/>
            <person name="Muendlein A."/>
            <person name="Felber R."/>
            <person name="Schnabl S."/>
            <person name="Hiller R."/>
            <person name="Schmidt W."/>
            <person name="Lecharny A."/>
            <person name="Aubourg S."/>
            <person name="Chefdor F."/>
            <person name="Cooke R."/>
            <person name="Berger C."/>
            <person name="Monfort A."/>
            <person name="Casacuberta E."/>
            <person name="Gibbons T."/>
            <person name="Weber N."/>
            <person name="Vandenbol M."/>
            <person name="Bargues M."/>
            <person name="Terol J."/>
            <person name="Torres A."/>
            <person name="Perez-Perez A."/>
            <person name="Purnelle B."/>
            <person name="Bent E."/>
            <person name="Johnson S."/>
            <person name="Tacon D."/>
            <person name="Jesse T."/>
            <person name="Heijnen L."/>
            <person name="Schwarz S."/>
            <person name="Scholler P."/>
            <person name="Heber S."/>
            <person name="Francs P."/>
            <person name="Bielke C."/>
            <person name="Frishman D."/>
            <person name="Haase D."/>
            <person name="Lemcke K."/>
            <person name="Mewes H.-W."/>
            <person name="Stocker S."/>
            <person name="Zaccaria P."/>
            <person name="Bevan M."/>
            <person name="Wilson R.K."/>
            <person name="de la Bastide M."/>
            <person name="Habermann K."/>
            <person name="Parnell L."/>
            <person name="Dedhia N."/>
            <person name="Gnoj L."/>
            <person name="Schutz K."/>
            <person name="Huang E."/>
            <person name="Spiegel L."/>
            <person name="Sekhon M."/>
            <person name="Murray J."/>
            <person name="Sheet P."/>
            <person name="Cordes M."/>
            <person name="Abu-Threideh J."/>
            <person name="Stoneking T."/>
            <person name="Kalicki J."/>
            <person name="Graves T."/>
            <person name="Harmon G."/>
            <person name="Edwards J."/>
            <person name="Latreille P."/>
            <person name="Courtney L."/>
            <person name="Cloud J."/>
            <person name="Abbott A."/>
            <person name="Scott K."/>
            <person name="Johnson D."/>
            <person name="Minx P."/>
            <person name="Bentley D."/>
            <person name="Fulton B."/>
            <person name="Miller N."/>
            <person name="Greco T."/>
            <person name="Kemp K."/>
            <person name="Kramer J."/>
            <person name="Fulton L."/>
            <person name="Mardis E."/>
            <person name="Dante M."/>
            <person name="Pepin K."/>
            <person name="Hillier L.W."/>
            <person name="Nelson J."/>
            <person name="Spieth J."/>
            <person name="Ryan E."/>
            <person name="Andrews S."/>
            <person name="Geisel C."/>
            <person name="Layman D."/>
            <person name="Du H."/>
            <person name="Ali J."/>
            <person name="Berghoff A."/>
            <person name="Jones K."/>
            <person name="Drone K."/>
            <person name="Cotton M."/>
            <person name="Joshu C."/>
            <person name="Antonoiu B."/>
            <person name="Zidanic M."/>
            <person name="Strong C."/>
            <person name="Sun H."/>
            <person name="Lamar B."/>
            <person name="Yordan C."/>
            <person name="Ma P."/>
            <person name="Zhong J."/>
            <person name="Preston R."/>
            <person name="Vil D."/>
            <person name="Shekher M."/>
            <person name="Matero A."/>
            <person name="Shah R."/>
            <person name="Swaby I.K."/>
            <person name="O'Shaughnessy A."/>
            <person name="Rodriguez M."/>
            <person name="Hoffman J."/>
            <person name="Till S."/>
            <person name="Granat S."/>
            <person name="Shohdy N."/>
            <person name="Hasegawa A."/>
            <person name="Hameed A."/>
            <person name="Lodhi M."/>
            <person name="Johnson A."/>
            <person name="Chen E."/>
            <person name="Marra M.A."/>
            <person name="Martienssen R."/>
            <person name="McCombie W.R."/>
        </authorList>
    </citation>
    <scope>NUCLEOTIDE SEQUENCE [LARGE SCALE GENOMIC DNA]</scope>
    <source>
        <strain>cv. Columbia</strain>
    </source>
</reference>
<reference key="3">
    <citation type="journal article" date="2017" name="Plant J.">
        <title>Araport11: a complete reannotation of the Arabidopsis thaliana reference genome.</title>
        <authorList>
            <person name="Cheng C.Y."/>
            <person name="Krishnakumar V."/>
            <person name="Chan A.P."/>
            <person name="Thibaud-Nissen F."/>
            <person name="Schobel S."/>
            <person name="Town C.D."/>
        </authorList>
    </citation>
    <scope>GENOME REANNOTATION</scope>
    <source>
        <strain>cv. Columbia</strain>
    </source>
</reference>
<reference key="4">
    <citation type="submission" date="2006-07" db="EMBL/GenBank/DDBJ databases">
        <title>Large-scale analysis of RIKEN Arabidopsis full-length (RAFL) cDNAs.</title>
        <authorList>
            <person name="Totoki Y."/>
            <person name="Seki M."/>
            <person name="Ishida J."/>
            <person name="Nakajima M."/>
            <person name="Enju A."/>
            <person name="Kamiya A."/>
            <person name="Narusaka M."/>
            <person name="Shin-i T."/>
            <person name="Nakagawa M."/>
            <person name="Sakamoto N."/>
            <person name="Oishi K."/>
            <person name="Kohara Y."/>
            <person name="Kobayashi M."/>
            <person name="Toyoda A."/>
            <person name="Sakaki Y."/>
            <person name="Sakurai T."/>
            <person name="Iida K."/>
            <person name="Akiyama K."/>
            <person name="Satou M."/>
            <person name="Toyoda T."/>
            <person name="Konagaya A."/>
            <person name="Carninci P."/>
            <person name="Kawai J."/>
            <person name="Hayashizaki Y."/>
            <person name="Shinozaki K."/>
        </authorList>
    </citation>
    <scope>NUCLEOTIDE SEQUENCE [LARGE SCALE MRNA]</scope>
    <source>
        <strain>cv. Columbia</strain>
    </source>
</reference>
<reference key="5">
    <citation type="journal article" date="2003" name="Science">
        <title>Empirical analysis of transcriptional activity in the Arabidopsis genome.</title>
        <authorList>
            <person name="Yamada K."/>
            <person name="Lim J."/>
            <person name="Dale J.M."/>
            <person name="Chen H."/>
            <person name="Shinn P."/>
            <person name="Palm C.J."/>
            <person name="Southwick A.M."/>
            <person name="Wu H.C."/>
            <person name="Kim C.J."/>
            <person name="Nguyen M."/>
            <person name="Pham P.K."/>
            <person name="Cheuk R.F."/>
            <person name="Karlin-Newmann G."/>
            <person name="Liu S.X."/>
            <person name="Lam B."/>
            <person name="Sakano H."/>
            <person name="Wu T."/>
            <person name="Yu G."/>
            <person name="Miranda M."/>
            <person name="Quach H.L."/>
            <person name="Tripp M."/>
            <person name="Chang C.H."/>
            <person name="Lee J.M."/>
            <person name="Toriumi M.J."/>
            <person name="Chan M.M."/>
            <person name="Tang C.C."/>
            <person name="Onodera C.S."/>
            <person name="Deng J.M."/>
            <person name="Akiyama K."/>
            <person name="Ansari Y."/>
            <person name="Arakawa T."/>
            <person name="Banh J."/>
            <person name="Banno F."/>
            <person name="Bowser L."/>
            <person name="Brooks S.Y."/>
            <person name="Carninci P."/>
            <person name="Chao Q."/>
            <person name="Choy N."/>
            <person name="Enju A."/>
            <person name="Goldsmith A.D."/>
            <person name="Gurjal M."/>
            <person name="Hansen N.F."/>
            <person name="Hayashizaki Y."/>
            <person name="Johnson-Hopson C."/>
            <person name="Hsuan V.W."/>
            <person name="Iida K."/>
            <person name="Karnes M."/>
            <person name="Khan S."/>
            <person name="Koesema E."/>
            <person name="Ishida J."/>
            <person name="Jiang P.X."/>
            <person name="Jones T."/>
            <person name="Kawai J."/>
            <person name="Kamiya A."/>
            <person name="Meyers C."/>
            <person name="Nakajima M."/>
            <person name="Narusaka M."/>
            <person name="Seki M."/>
            <person name="Sakurai T."/>
            <person name="Satou M."/>
            <person name="Tamse R."/>
            <person name="Vaysberg M."/>
            <person name="Wallender E.K."/>
            <person name="Wong C."/>
            <person name="Yamamura Y."/>
            <person name="Yuan S."/>
            <person name="Shinozaki K."/>
            <person name="Davis R.W."/>
            <person name="Theologis A."/>
            <person name="Ecker J.R."/>
        </authorList>
    </citation>
    <scope>NUCLEOTIDE SEQUENCE [LARGE SCALE MRNA] OF 48-565</scope>
    <source>
        <strain>cv. Columbia</strain>
    </source>
</reference>
<organism>
    <name type="scientific">Arabidopsis thaliana</name>
    <name type="common">Mouse-ear cress</name>
    <dbReference type="NCBI Taxonomy" id="3702"/>
    <lineage>
        <taxon>Eukaryota</taxon>
        <taxon>Viridiplantae</taxon>
        <taxon>Streptophyta</taxon>
        <taxon>Embryophyta</taxon>
        <taxon>Tracheophyta</taxon>
        <taxon>Spermatophyta</taxon>
        <taxon>Magnoliopsida</taxon>
        <taxon>eudicotyledons</taxon>
        <taxon>Gunneridae</taxon>
        <taxon>Pentapetalae</taxon>
        <taxon>rosids</taxon>
        <taxon>malvids</taxon>
        <taxon>Brassicales</taxon>
        <taxon>Brassicaceae</taxon>
        <taxon>Camelineae</taxon>
        <taxon>Arabidopsis</taxon>
    </lineage>
</organism>
<name>DRTS2_ARATH</name>
<sequence length="565" mass="63209">MRCLQNSAKTLPLAFKSALLPLSQRWFCKFSPKPSSLTNIFKVSISTMANTLNGNVIMTSKPQSTYQVVVAATKEMGIGKDGKLPWNLPTDLKFFKDLTLSTSDSAKKNAVVMGRKTWESIPKKYRPLSGRLNVVLSRSSGFDIANTENVVTCSSIDSALDLLAAPPFSLSIEKVFVIGGGDILREALNKPSCEAIHITEIDTSIDCDTFIPTVDTSAYQPWCSSFPICENGLRFSFTTHVRVKSSSAGEASDESDGSKVLQVDWKKFSSVLPKMIFDRHEEYLYLNLVKEIISNGNLKDDRTGTGTLSKFGCQMKFNLRRNFPLLTTKRVFWRGVVEELLWFISGSTNAKVLQEKGIRIWDGNASRAYLDGIGLTEREEGDLGPVYGFQWRHFGAKYTDMHADYTGQGFDQLLDVINKIKNNPDDRRIIMSAWNPSDLKLMALPPCHMFAQFYVANGELSCQMYQRSADMGLGVPFNIASYSLLTCILAHVCDLVPGDFIHVIGDAHVYKNHVRPLQEQLENPPKPFPVLKINPEKKDIDSFVADDFELIGYDPHKKIDMKMAV</sequence>
<comment type="function">
    <text>Bifunctional enzyme. Involved in de novo dTMP biosynthesis. Key enzyme in folate metabolism. Can play two different roles depending on the source of dihydrofolate: de novo synthesis of tetrahydrofolate or recycling of the dihydrofolate released as one of the end products of the TS catalyzed reaction. Catalyzes an essential reaction for de novo glycine and purine synthesis, DNA precursor synthesis, and for the conversion of dUMP to dTMP.</text>
</comment>
<comment type="catalytic activity">
    <reaction>
        <text>(6S)-5,6,7,8-tetrahydrofolate + NADP(+) = 7,8-dihydrofolate + NADPH + H(+)</text>
        <dbReference type="Rhea" id="RHEA:15009"/>
        <dbReference type="ChEBI" id="CHEBI:15378"/>
        <dbReference type="ChEBI" id="CHEBI:57451"/>
        <dbReference type="ChEBI" id="CHEBI:57453"/>
        <dbReference type="ChEBI" id="CHEBI:57783"/>
        <dbReference type="ChEBI" id="CHEBI:58349"/>
        <dbReference type="EC" id="1.5.1.3"/>
    </reaction>
</comment>
<comment type="catalytic activity">
    <reaction>
        <text>dUMP + (6R)-5,10-methylene-5,6,7,8-tetrahydrofolate = 7,8-dihydrofolate + dTMP</text>
        <dbReference type="Rhea" id="RHEA:12104"/>
        <dbReference type="ChEBI" id="CHEBI:15636"/>
        <dbReference type="ChEBI" id="CHEBI:57451"/>
        <dbReference type="ChEBI" id="CHEBI:63528"/>
        <dbReference type="ChEBI" id="CHEBI:246422"/>
        <dbReference type="EC" id="2.1.1.45"/>
    </reaction>
</comment>
<comment type="pathway">
    <text>Cofactor biosynthesis; tetrahydrofolate biosynthesis; 5,6,7,8-tetrahydrofolate from 7,8-dihydrofolate: step 1/1.</text>
</comment>
<comment type="subunit">
    <text evidence="1">Heterodimer or homodimer.</text>
</comment>
<comment type="similarity">
    <text evidence="2">In the N-terminal section; belongs to the dihydrofolate reductase family.</text>
</comment>
<comment type="similarity">
    <text evidence="2">In the C-terminal section; belongs to the thymidylate synthase family.</text>
</comment>
<comment type="sequence caution" evidence="2">
    <conflict type="erroneous gene model prediction">
        <sequence resource="EMBL-CDS" id="AAA32789"/>
    </conflict>
</comment>
<comment type="sequence caution" evidence="2">
    <conflict type="erroneous gene model prediction">
        <sequence resource="EMBL-CDS" id="CAA18836"/>
    </conflict>
</comment>
<comment type="sequence caution" evidence="2">
    <conflict type="erroneous gene model prediction">
        <sequence resource="EMBL-CDS" id="CAB80174"/>
    </conflict>
</comment>